<keyword id="KW-0131">Cell cycle</keyword>
<keyword id="KW-0132">Cell division</keyword>
<keyword id="KW-0143">Chaperone</keyword>
<keyword id="KW-0963">Cytoplasm</keyword>
<keyword id="KW-0413">Isomerase</keyword>
<keyword id="KW-0697">Rotamase</keyword>
<evidence type="ECO:0000255" key="1">
    <source>
        <dbReference type="HAMAP-Rule" id="MF_00303"/>
    </source>
</evidence>
<proteinExistence type="inferred from homology"/>
<accession>A4W7A7</accession>
<gene>
    <name evidence="1" type="primary">tig</name>
    <name type="ordered locus">Ent638_0903</name>
</gene>
<organism>
    <name type="scientific">Enterobacter sp. (strain 638)</name>
    <dbReference type="NCBI Taxonomy" id="399742"/>
    <lineage>
        <taxon>Bacteria</taxon>
        <taxon>Pseudomonadati</taxon>
        <taxon>Pseudomonadota</taxon>
        <taxon>Gammaproteobacteria</taxon>
        <taxon>Enterobacterales</taxon>
        <taxon>Enterobacteriaceae</taxon>
        <taxon>Enterobacter</taxon>
    </lineage>
</organism>
<dbReference type="EC" id="5.2.1.8" evidence="1"/>
<dbReference type="EMBL" id="CP000653">
    <property type="protein sequence ID" value="ABP59587.1"/>
    <property type="molecule type" value="Genomic_DNA"/>
</dbReference>
<dbReference type="RefSeq" id="WP_012016308.1">
    <property type="nucleotide sequence ID" value="NC_009436.1"/>
</dbReference>
<dbReference type="SMR" id="A4W7A7"/>
<dbReference type="STRING" id="399742.Ent638_0903"/>
<dbReference type="GeneID" id="93308030"/>
<dbReference type="KEGG" id="ent:Ent638_0903"/>
<dbReference type="eggNOG" id="COG0544">
    <property type="taxonomic scope" value="Bacteria"/>
</dbReference>
<dbReference type="HOGENOM" id="CLU_033058_2_0_6"/>
<dbReference type="OrthoDB" id="9767721at2"/>
<dbReference type="Proteomes" id="UP000000230">
    <property type="component" value="Chromosome"/>
</dbReference>
<dbReference type="GO" id="GO:0005737">
    <property type="term" value="C:cytoplasm"/>
    <property type="evidence" value="ECO:0007669"/>
    <property type="project" value="UniProtKB-SubCell"/>
</dbReference>
<dbReference type="GO" id="GO:0003755">
    <property type="term" value="F:peptidyl-prolyl cis-trans isomerase activity"/>
    <property type="evidence" value="ECO:0007669"/>
    <property type="project" value="UniProtKB-UniRule"/>
</dbReference>
<dbReference type="GO" id="GO:0044183">
    <property type="term" value="F:protein folding chaperone"/>
    <property type="evidence" value="ECO:0007669"/>
    <property type="project" value="TreeGrafter"/>
</dbReference>
<dbReference type="GO" id="GO:0043022">
    <property type="term" value="F:ribosome binding"/>
    <property type="evidence" value="ECO:0007669"/>
    <property type="project" value="TreeGrafter"/>
</dbReference>
<dbReference type="GO" id="GO:0051083">
    <property type="term" value="P:'de novo' cotranslational protein folding"/>
    <property type="evidence" value="ECO:0007669"/>
    <property type="project" value="TreeGrafter"/>
</dbReference>
<dbReference type="GO" id="GO:0051301">
    <property type="term" value="P:cell division"/>
    <property type="evidence" value="ECO:0007669"/>
    <property type="project" value="UniProtKB-KW"/>
</dbReference>
<dbReference type="GO" id="GO:0061077">
    <property type="term" value="P:chaperone-mediated protein folding"/>
    <property type="evidence" value="ECO:0007669"/>
    <property type="project" value="TreeGrafter"/>
</dbReference>
<dbReference type="GO" id="GO:0015031">
    <property type="term" value="P:protein transport"/>
    <property type="evidence" value="ECO:0007669"/>
    <property type="project" value="UniProtKB-UniRule"/>
</dbReference>
<dbReference type="GO" id="GO:0043335">
    <property type="term" value="P:protein unfolding"/>
    <property type="evidence" value="ECO:0007669"/>
    <property type="project" value="TreeGrafter"/>
</dbReference>
<dbReference type="FunFam" id="1.10.3120.10:FF:000001">
    <property type="entry name" value="Trigger factor"/>
    <property type="match status" value="1"/>
</dbReference>
<dbReference type="FunFam" id="3.10.50.40:FF:000001">
    <property type="entry name" value="Trigger factor"/>
    <property type="match status" value="1"/>
</dbReference>
<dbReference type="FunFam" id="3.30.70.1050:FF:000001">
    <property type="entry name" value="Trigger factor"/>
    <property type="match status" value="1"/>
</dbReference>
<dbReference type="Gene3D" id="3.10.50.40">
    <property type="match status" value="1"/>
</dbReference>
<dbReference type="Gene3D" id="3.30.70.1050">
    <property type="entry name" value="Trigger factor ribosome-binding domain"/>
    <property type="match status" value="1"/>
</dbReference>
<dbReference type="Gene3D" id="1.10.3120.10">
    <property type="entry name" value="Trigger factor, C-terminal domain"/>
    <property type="match status" value="1"/>
</dbReference>
<dbReference type="HAMAP" id="MF_00303">
    <property type="entry name" value="Trigger_factor_Tig"/>
    <property type="match status" value="1"/>
</dbReference>
<dbReference type="InterPro" id="IPR046357">
    <property type="entry name" value="PPIase_dom_sf"/>
</dbReference>
<dbReference type="InterPro" id="IPR001179">
    <property type="entry name" value="PPIase_FKBP_dom"/>
</dbReference>
<dbReference type="InterPro" id="IPR005215">
    <property type="entry name" value="Trig_fac"/>
</dbReference>
<dbReference type="InterPro" id="IPR008880">
    <property type="entry name" value="Trigger_fac_C"/>
</dbReference>
<dbReference type="InterPro" id="IPR037041">
    <property type="entry name" value="Trigger_fac_C_sf"/>
</dbReference>
<dbReference type="InterPro" id="IPR008881">
    <property type="entry name" value="Trigger_fac_ribosome-bd_bac"/>
</dbReference>
<dbReference type="InterPro" id="IPR036611">
    <property type="entry name" value="Trigger_fac_ribosome-bd_sf"/>
</dbReference>
<dbReference type="InterPro" id="IPR027304">
    <property type="entry name" value="Trigger_fact/SurA_dom_sf"/>
</dbReference>
<dbReference type="NCBIfam" id="TIGR00115">
    <property type="entry name" value="tig"/>
    <property type="match status" value="1"/>
</dbReference>
<dbReference type="PANTHER" id="PTHR30560">
    <property type="entry name" value="TRIGGER FACTOR CHAPERONE AND PEPTIDYL-PROLYL CIS/TRANS ISOMERASE"/>
    <property type="match status" value="1"/>
</dbReference>
<dbReference type="PANTHER" id="PTHR30560:SF3">
    <property type="entry name" value="TRIGGER FACTOR-LIKE PROTEIN TIG, CHLOROPLASTIC"/>
    <property type="match status" value="1"/>
</dbReference>
<dbReference type="Pfam" id="PF00254">
    <property type="entry name" value="FKBP_C"/>
    <property type="match status" value="1"/>
</dbReference>
<dbReference type="Pfam" id="PF05698">
    <property type="entry name" value="Trigger_C"/>
    <property type="match status" value="1"/>
</dbReference>
<dbReference type="Pfam" id="PF05697">
    <property type="entry name" value="Trigger_N"/>
    <property type="match status" value="1"/>
</dbReference>
<dbReference type="PIRSF" id="PIRSF003095">
    <property type="entry name" value="Trigger_factor"/>
    <property type="match status" value="1"/>
</dbReference>
<dbReference type="SUPFAM" id="SSF54534">
    <property type="entry name" value="FKBP-like"/>
    <property type="match status" value="1"/>
</dbReference>
<dbReference type="SUPFAM" id="SSF109998">
    <property type="entry name" value="Triger factor/SurA peptide-binding domain-like"/>
    <property type="match status" value="1"/>
</dbReference>
<dbReference type="SUPFAM" id="SSF102735">
    <property type="entry name" value="Trigger factor ribosome-binding domain"/>
    <property type="match status" value="1"/>
</dbReference>
<dbReference type="PROSITE" id="PS50059">
    <property type="entry name" value="FKBP_PPIASE"/>
    <property type="match status" value="1"/>
</dbReference>
<sequence>MQVSVETTQGLGRRVTITIAADSIETAVKSELVNVAKKVRIDGFRKGKVPMNVVAQRYGASVRQDVLGELMSRNFIDAIIKEKINPAGAPNYVPGEYKQGEDFTYSVEFEVYPEVELKGLETIEVEKPVVEVTDADVDGMLDTLRKQQANWKDKDGAVDAEDRVTIDFSGSVDGEEFEGGKASDFVLAMGQGRMIPGFEEGIKGHKAGEEFTIDVTFPEEYHAENLKGKAAKFVINLKKVEERELPELTEEFIKRFGVEDGSVAGLRAEVRKNMERELNGAVRNRVKSQAIDGLVKANEIDVPAALIDSEIDVLRRQAAQRFGGNQQQALELPRELFEEQAKRRVVVGLLLGEVIRTHELKADDERVKGLIEEMASAYEDPSEVVQFYGSNKELMDNMRNVALEEQAVEAVLAKAKVSEKATSFNELMNQQA</sequence>
<reference key="1">
    <citation type="journal article" date="2010" name="PLoS Genet.">
        <title>Genome sequence of the plant growth promoting endophytic bacterium Enterobacter sp. 638.</title>
        <authorList>
            <person name="Taghavi S."/>
            <person name="van der Lelie D."/>
            <person name="Hoffman A."/>
            <person name="Zhang Y.B."/>
            <person name="Walla M.D."/>
            <person name="Vangronsveld J."/>
            <person name="Newman L."/>
            <person name="Monchy S."/>
        </authorList>
    </citation>
    <scope>NUCLEOTIDE SEQUENCE [LARGE SCALE GENOMIC DNA]</scope>
    <source>
        <strain>638</strain>
    </source>
</reference>
<feature type="chain" id="PRO_1000059327" description="Trigger factor">
    <location>
        <begin position="1"/>
        <end position="432"/>
    </location>
</feature>
<feature type="domain" description="PPIase FKBP-type" evidence="1">
    <location>
        <begin position="161"/>
        <end position="246"/>
    </location>
</feature>
<comment type="function">
    <text evidence="1">Involved in protein export. Acts as a chaperone by maintaining the newly synthesized protein in an open conformation. Functions as a peptidyl-prolyl cis-trans isomerase.</text>
</comment>
<comment type="catalytic activity">
    <reaction evidence="1">
        <text>[protein]-peptidylproline (omega=180) = [protein]-peptidylproline (omega=0)</text>
        <dbReference type="Rhea" id="RHEA:16237"/>
        <dbReference type="Rhea" id="RHEA-COMP:10747"/>
        <dbReference type="Rhea" id="RHEA-COMP:10748"/>
        <dbReference type="ChEBI" id="CHEBI:83833"/>
        <dbReference type="ChEBI" id="CHEBI:83834"/>
        <dbReference type="EC" id="5.2.1.8"/>
    </reaction>
</comment>
<comment type="subcellular location">
    <subcellularLocation>
        <location>Cytoplasm</location>
    </subcellularLocation>
    <text evidence="1">About half TF is bound to the ribosome near the polypeptide exit tunnel while the other half is free in the cytoplasm.</text>
</comment>
<comment type="domain">
    <text evidence="1">Consists of 3 domains; the N-terminus binds the ribosome, the middle domain has PPIase activity, while the C-terminus has intrinsic chaperone activity on its own.</text>
</comment>
<comment type="similarity">
    <text evidence="1">Belongs to the FKBP-type PPIase family. Tig subfamily.</text>
</comment>
<protein>
    <recommendedName>
        <fullName evidence="1">Trigger factor</fullName>
        <shortName evidence="1">TF</shortName>
        <ecNumber evidence="1">5.2.1.8</ecNumber>
    </recommendedName>
    <alternativeName>
        <fullName evidence="1">PPIase</fullName>
    </alternativeName>
</protein>
<name>TIG_ENT38</name>